<dbReference type="EMBL" id="AP008232">
    <property type="protein sequence ID" value="BAE75563.1"/>
    <property type="molecule type" value="Genomic_DNA"/>
</dbReference>
<dbReference type="RefSeq" id="WP_011412096.1">
    <property type="nucleotide sequence ID" value="NC_007712.1"/>
</dbReference>
<dbReference type="SMR" id="Q2NQL2"/>
<dbReference type="STRING" id="343509.SG2288"/>
<dbReference type="KEGG" id="sgl:SG2288"/>
<dbReference type="eggNOG" id="COG2923">
    <property type="taxonomic scope" value="Bacteria"/>
</dbReference>
<dbReference type="HOGENOM" id="CLU_155943_1_0_6"/>
<dbReference type="OrthoDB" id="9789418at2"/>
<dbReference type="BioCyc" id="SGLO343509:SGP1_RS20895-MONOMER"/>
<dbReference type="Proteomes" id="UP000001932">
    <property type="component" value="Chromosome"/>
</dbReference>
<dbReference type="GO" id="GO:0005737">
    <property type="term" value="C:cytoplasm"/>
    <property type="evidence" value="ECO:0007669"/>
    <property type="project" value="UniProtKB-SubCell"/>
</dbReference>
<dbReference type="GO" id="GO:0008033">
    <property type="term" value="P:tRNA processing"/>
    <property type="evidence" value="ECO:0007669"/>
    <property type="project" value="UniProtKB-UniRule"/>
</dbReference>
<dbReference type="Gene3D" id="3.40.1260.10">
    <property type="entry name" value="DsrEFH-like"/>
    <property type="match status" value="1"/>
</dbReference>
<dbReference type="HAMAP" id="MF_00389">
    <property type="entry name" value="Thiourid_synth_C"/>
    <property type="match status" value="1"/>
</dbReference>
<dbReference type="InterPro" id="IPR027396">
    <property type="entry name" value="DsrEFH-like"/>
</dbReference>
<dbReference type="InterPro" id="IPR003787">
    <property type="entry name" value="Sulphur_relay_DsrE/F-like"/>
</dbReference>
<dbReference type="InterPro" id="IPR037450">
    <property type="entry name" value="Sulphur_relay_TusC"/>
</dbReference>
<dbReference type="InterPro" id="IPR017462">
    <property type="entry name" value="Sulphur_relay_TusC/DsrF"/>
</dbReference>
<dbReference type="NCBIfam" id="NF001238">
    <property type="entry name" value="PRK00211.1"/>
    <property type="match status" value="1"/>
</dbReference>
<dbReference type="NCBIfam" id="TIGR03010">
    <property type="entry name" value="sulf_tusC_dsrF"/>
    <property type="match status" value="1"/>
</dbReference>
<dbReference type="PANTHER" id="PTHR38780">
    <property type="entry name" value="PROTEIN TUSC"/>
    <property type="match status" value="1"/>
</dbReference>
<dbReference type="PANTHER" id="PTHR38780:SF1">
    <property type="entry name" value="PROTEIN TUSC"/>
    <property type="match status" value="1"/>
</dbReference>
<dbReference type="Pfam" id="PF02635">
    <property type="entry name" value="DsrE"/>
    <property type="match status" value="1"/>
</dbReference>
<dbReference type="SUPFAM" id="SSF75169">
    <property type="entry name" value="DsrEFH-like"/>
    <property type="match status" value="1"/>
</dbReference>
<name>TUSC_SODGM</name>
<reference key="1">
    <citation type="journal article" date="2006" name="Genome Res.">
        <title>Massive genome erosion and functional adaptations provide insights into the symbiotic lifestyle of Sodalis glossinidius in the tsetse host.</title>
        <authorList>
            <person name="Toh H."/>
            <person name="Weiss B.L."/>
            <person name="Perkin S.A.H."/>
            <person name="Yamashita A."/>
            <person name="Oshima K."/>
            <person name="Hattori M."/>
            <person name="Aksoy S."/>
        </authorList>
    </citation>
    <scope>NUCLEOTIDE SEQUENCE [LARGE SCALE GENOMIC DNA]</scope>
    <source>
        <strain>morsitans</strain>
    </source>
</reference>
<gene>
    <name evidence="1" type="primary">tusC</name>
    <name type="ordered locus">SG2288</name>
</gene>
<keyword id="KW-0963">Cytoplasm</keyword>
<keyword id="KW-0819">tRNA processing</keyword>
<protein>
    <recommendedName>
        <fullName evidence="1">Protein TusC</fullName>
    </recommendedName>
    <alternativeName>
        <fullName evidence="1">tRNA 2-thiouridine synthesizing protein C</fullName>
    </alternativeName>
</protein>
<evidence type="ECO:0000255" key="1">
    <source>
        <dbReference type="HAMAP-Rule" id="MF_00389"/>
    </source>
</evidence>
<organism>
    <name type="scientific">Sodalis glossinidius (strain morsitans)</name>
    <dbReference type="NCBI Taxonomy" id="343509"/>
    <lineage>
        <taxon>Bacteria</taxon>
        <taxon>Pseudomonadati</taxon>
        <taxon>Pseudomonadota</taxon>
        <taxon>Gammaproteobacteria</taxon>
        <taxon>Enterobacterales</taxon>
        <taxon>Bruguierivoracaceae</taxon>
        <taxon>Sodalis</taxon>
    </lineage>
</organism>
<sequence>MNRIAFVFTHGPHGDAAGREGLDALLATSALAEDIGVFFIADGVLLLLEQQQPAQILARDFVATFGVLSLYDVDSLYLCAESAAERGLDADAGWVLNAEWLSAADWRQRLSAYDTVMTF</sequence>
<comment type="function">
    <text evidence="1">Part of a sulfur-relay system required for 2-thiolation of 5-methylaminomethyl-2-thiouridine (mnm(5)s(2)U) at tRNA wobble positions.</text>
</comment>
<comment type="subunit">
    <text evidence="1">Heterohexamer, formed by a dimer of trimers. The hexameric TusBCD complex contains 2 copies each of TusB, TusC and TusD. The TusBCD complex interacts with TusE.</text>
</comment>
<comment type="subcellular location">
    <subcellularLocation>
        <location evidence="1">Cytoplasm</location>
    </subcellularLocation>
</comment>
<comment type="similarity">
    <text evidence="1">Belongs to the DsrF/TusC family.</text>
</comment>
<accession>Q2NQL2</accession>
<feature type="chain" id="PRO_0000234460" description="Protein TusC">
    <location>
        <begin position="1"/>
        <end position="119"/>
    </location>
</feature>
<proteinExistence type="inferred from homology"/>